<sequence length="106" mass="12518">MPFLDIQKRFGLNIDRWLTIQSGEQPYKMAGRCHAFEKEWIECAHGIGYTRAEKECKIEYDDFVECLLRQKTMRRAGTIRKQRDKLIKEGKYTPPPHHIGKGEPRP</sequence>
<proteinExistence type="inferred from homology"/>
<gene>
    <name type="primary">NDUFS5</name>
</gene>
<evidence type="ECO:0000250" key="1">
    <source>
        <dbReference type="UniProtKB" id="O43920"/>
    </source>
</evidence>
<evidence type="ECO:0000255" key="2">
    <source>
        <dbReference type="PROSITE-ProRule" id="PRU01150"/>
    </source>
</evidence>
<evidence type="ECO:0000256" key="3">
    <source>
        <dbReference type="SAM" id="MobiDB-lite"/>
    </source>
</evidence>
<evidence type="ECO:0000305" key="4"/>
<accession>Q0MQH4</accession>
<dbReference type="EMBL" id="DQ885660">
    <property type="protein sequence ID" value="ABH12169.1"/>
    <property type="molecule type" value="mRNA"/>
</dbReference>
<dbReference type="RefSeq" id="NP_001065257.1">
    <property type="nucleotide sequence ID" value="NM_001071789.1"/>
</dbReference>
<dbReference type="RefSeq" id="XP_009451335.1">
    <property type="nucleotide sequence ID" value="XM_009453060.3"/>
</dbReference>
<dbReference type="RefSeq" id="XP_009451342.1">
    <property type="nucleotide sequence ID" value="XM_009453067.1"/>
</dbReference>
<dbReference type="SMR" id="Q0MQH4"/>
<dbReference type="FunCoup" id="Q0MQH4">
    <property type="interactions" value="867"/>
</dbReference>
<dbReference type="STRING" id="9598.ENSPTRP00000000990"/>
<dbReference type="PaxDb" id="9598-ENSPTRP00000000990"/>
<dbReference type="Ensembl" id="ENSPTRT00000001098.4">
    <property type="protein sequence ID" value="ENSPTRP00000000990.3"/>
    <property type="gene ID" value="ENSPTRG00000000568.4"/>
</dbReference>
<dbReference type="GeneID" id="456776"/>
<dbReference type="KEGG" id="ptr:456776"/>
<dbReference type="CTD" id="4725"/>
<dbReference type="VGNC" id="VGNC:8079">
    <property type="gene designation" value="NDUFS5"/>
</dbReference>
<dbReference type="eggNOG" id="KOG4110">
    <property type="taxonomic scope" value="Eukaryota"/>
</dbReference>
<dbReference type="GeneTree" id="ENSGT00390000002919"/>
<dbReference type="HOGENOM" id="CLU_176387_0_0_1"/>
<dbReference type="InParanoid" id="Q0MQH4"/>
<dbReference type="OMA" id="RQQRDKM"/>
<dbReference type="OrthoDB" id="451at9604"/>
<dbReference type="TreeFam" id="TF332111"/>
<dbReference type="Proteomes" id="UP000002277">
    <property type="component" value="Chromosome 1"/>
</dbReference>
<dbReference type="Bgee" id="ENSPTRG00000000568">
    <property type="expression patterns" value="Expressed in heart and 21 other cell types or tissues"/>
</dbReference>
<dbReference type="GO" id="GO:0005743">
    <property type="term" value="C:mitochondrial inner membrane"/>
    <property type="evidence" value="ECO:0007669"/>
    <property type="project" value="UniProtKB-SubCell"/>
</dbReference>
<dbReference type="GO" id="GO:0005758">
    <property type="term" value="C:mitochondrial intermembrane space"/>
    <property type="evidence" value="ECO:0007669"/>
    <property type="project" value="UniProtKB-SubCell"/>
</dbReference>
<dbReference type="GO" id="GO:0005739">
    <property type="term" value="C:mitochondrion"/>
    <property type="evidence" value="ECO:0000250"/>
    <property type="project" value="UniProtKB"/>
</dbReference>
<dbReference type="GO" id="GO:0045271">
    <property type="term" value="C:respiratory chain complex I"/>
    <property type="evidence" value="ECO:0000250"/>
    <property type="project" value="UniProtKB"/>
</dbReference>
<dbReference type="GO" id="GO:0032981">
    <property type="term" value="P:mitochondrial respiratory chain complex I assembly"/>
    <property type="evidence" value="ECO:0000250"/>
    <property type="project" value="UniProtKB"/>
</dbReference>
<dbReference type="CDD" id="cd24141">
    <property type="entry name" value="NDUFS5-like"/>
    <property type="match status" value="1"/>
</dbReference>
<dbReference type="InterPro" id="IPR019342">
    <property type="entry name" value="NADH_UbQ_OxRdtase_FeS-su5"/>
</dbReference>
<dbReference type="PANTHER" id="PTHR15224">
    <property type="entry name" value="NADH DEHYDROGENASE [UBIQUINONE] IRON-SULFUR PROTEIN 5"/>
    <property type="match status" value="1"/>
</dbReference>
<dbReference type="PANTHER" id="PTHR15224:SF1">
    <property type="entry name" value="NADH DEHYDROGENASE [UBIQUINONE] IRON-SULFUR PROTEIN 5"/>
    <property type="match status" value="1"/>
</dbReference>
<dbReference type="Pfam" id="PF10200">
    <property type="entry name" value="Ndufs5"/>
    <property type="match status" value="1"/>
</dbReference>
<dbReference type="PROSITE" id="PS51808">
    <property type="entry name" value="CHCH"/>
    <property type="match status" value="1"/>
</dbReference>
<protein>
    <recommendedName>
        <fullName>NADH dehydrogenase [ubiquinone] iron-sulfur protein 5</fullName>
    </recommendedName>
    <alternativeName>
        <fullName>Complex I-15 kDa</fullName>
        <shortName>CI-15 kDa</shortName>
    </alternativeName>
    <alternativeName>
        <fullName>NADH-ubiquinone oxidoreductase 15 kDa subunit</fullName>
    </alternativeName>
</protein>
<keyword id="KW-1015">Disulfide bond</keyword>
<keyword id="KW-0249">Electron transport</keyword>
<keyword id="KW-0472">Membrane</keyword>
<keyword id="KW-0496">Mitochondrion</keyword>
<keyword id="KW-0999">Mitochondrion inner membrane</keyword>
<keyword id="KW-1185">Reference proteome</keyword>
<keyword id="KW-0679">Respiratory chain</keyword>
<keyword id="KW-0813">Transport</keyword>
<name>NDUS5_PANTR</name>
<comment type="function">
    <text evidence="1">Accessory subunit of the mitochondrial membrane respiratory chain NADH dehydrogenase (Complex I), that is believed not to be involved in catalysis. Complex I functions in the transfer of electrons from NADH to the respiratory chain. The immediate electron acceptor for the enzyme is believed to be ubiquinone.</text>
</comment>
<comment type="subunit">
    <text evidence="1">Mammalian complex I is composed of 45 different subunits. This is a component of the iron-sulfur (IP) fragment of the enzyme.</text>
</comment>
<comment type="subcellular location">
    <subcellularLocation>
        <location evidence="1">Mitochondrion inner membrane</location>
        <topology evidence="1">Peripheral membrane protein</topology>
    </subcellularLocation>
    <subcellularLocation>
        <location evidence="1">Mitochondrion intermembrane space</location>
    </subcellularLocation>
</comment>
<comment type="domain">
    <text evidence="1">Contains two C-X9-C motifs that are predicted to form a helix-coil-helix structure, permitting the formation of intramolecular disulfide bonds.</text>
</comment>
<comment type="similarity">
    <text evidence="4">Belongs to the complex I NDUFS5 subunit family.</text>
</comment>
<organism>
    <name type="scientific">Pan troglodytes</name>
    <name type="common">Chimpanzee</name>
    <dbReference type="NCBI Taxonomy" id="9598"/>
    <lineage>
        <taxon>Eukaryota</taxon>
        <taxon>Metazoa</taxon>
        <taxon>Chordata</taxon>
        <taxon>Craniata</taxon>
        <taxon>Vertebrata</taxon>
        <taxon>Euteleostomi</taxon>
        <taxon>Mammalia</taxon>
        <taxon>Eutheria</taxon>
        <taxon>Euarchontoglires</taxon>
        <taxon>Primates</taxon>
        <taxon>Haplorrhini</taxon>
        <taxon>Catarrhini</taxon>
        <taxon>Hominidae</taxon>
        <taxon>Pan</taxon>
    </lineage>
</organism>
<reference key="1">
    <citation type="journal article" date="2006" name="Gene">
        <title>Adaptive selection of mitochondrial complex I subunits during primate radiation.</title>
        <authorList>
            <person name="Mishmar D."/>
            <person name="Ruiz-Pesini E."/>
            <person name="Mondragon-Palomino M."/>
            <person name="Procaccio V."/>
            <person name="Gaut B."/>
            <person name="Wallace D.C."/>
        </authorList>
    </citation>
    <scope>NUCLEOTIDE SEQUENCE [MRNA]</scope>
</reference>
<feature type="chain" id="PRO_0000251866" description="NADH dehydrogenase [ubiquinone] iron-sulfur protein 5">
    <location>
        <begin position="1"/>
        <end position="106"/>
    </location>
</feature>
<feature type="domain" description="CHCH" evidence="2">
    <location>
        <begin position="30"/>
        <end position="74"/>
    </location>
</feature>
<feature type="region of interest" description="Disordered" evidence="3">
    <location>
        <begin position="84"/>
        <end position="106"/>
    </location>
</feature>
<feature type="short sequence motif" description="Cx9C motif 1" evidence="2">
    <location>
        <begin position="33"/>
        <end position="43"/>
    </location>
</feature>
<feature type="short sequence motif" description="Cx9C motif 2" evidence="2">
    <location>
        <begin position="56"/>
        <end position="66"/>
    </location>
</feature>
<feature type="disulfide bond" evidence="2">
    <location>
        <begin position="33"/>
        <end position="66"/>
    </location>
</feature>
<feature type="disulfide bond" evidence="2">
    <location>
        <begin position="43"/>
        <end position="56"/>
    </location>
</feature>